<accession>Q8L719</accession>
<accession>Q9LZ49</accession>
<gene>
    <name type="primary">ALY2</name>
    <name type="synonym">THO4B</name>
    <name type="ordered locus">At5g02530</name>
</gene>
<comment type="function">
    <text evidence="1">Export adapter involved in nuclear export of spliced and unspliced mRNA.</text>
</comment>
<comment type="subunit">
    <text evidence="5">Interacts with RH15 and RH56.</text>
</comment>
<comment type="subcellular location">
    <subcellularLocation>
        <location evidence="4">Nucleus</location>
        <location evidence="4">Nucleoplasm</location>
    </subcellularLocation>
</comment>
<comment type="alternative products">
    <event type="alternative splicing"/>
    <isoform>
        <id>Q8L719-1</id>
        <name>1</name>
        <sequence type="displayed"/>
    </isoform>
    <isoform>
        <id>Q8L719-2</id>
        <name>2</name>
        <sequence type="described" ref="VSP_053742"/>
    </isoform>
</comment>
<comment type="similarity">
    <text evidence="6">Belongs to the ALYREF family.</text>
</comment>
<evidence type="ECO:0000250" key="1"/>
<evidence type="ECO:0000255" key="2">
    <source>
        <dbReference type="PROSITE-ProRule" id="PRU00176"/>
    </source>
</evidence>
<evidence type="ECO:0000256" key="3">
    <source>
        <dbReference type="SAM" id="MobiDB-lite"/>
    </source>
</evidence>
<evidence type="ECO:0000269" key="4">
    <source>
    </source>
</evidence>
<evidence type="ECO:0000269" key="5">
    <source>
    </source>
</evidence>
<evidence type="ECO:0000305" key="6"/>
<evidence type="ECO:0007744" key="7">
    <source>
    </source>
</evidence>
<organism>
    <name type="scientific">Arabidopsis thaliana</name>
    <name type="common">Mouse-ear cress</name>
    <dbReference type="NCBI Taxonomy" id="3702"/>
    <lineage>
        <taxon>Eukaryota</taxon>
        <taxon>Viridiplantae</taxon>
        <taxon>Streptophyta</taxon>
        <taxon>Embryophyta</taxon>
        <taxon>Tracheophyta</taxon>
        <taxon>Spermatophyta</taxon>
        <taxon>Magnoliopsida</taxon>
        <taxon>eudicotyledons</taxon>
        <taxon>Gunneridae</taxon>
        <taxon>Pentapetalae</taxon>
        <taxon>rosids</taxon>
        <taxon>malvids</taxon>
        <taxon>Brassicales</taxon>
        <taxon>Brassicaceae</taxon>
        <taxon>Camelineae</taxon>
        <taxon>Arabidopsis</taxon>
    </lineage>
</organism>
<sequence>MSGGLDMSLDDIIKSNRKPTGSRGRGGIGGGNNTGGRGGSGSNSGPSRRFANRVGARTAPYSRPIQQQQAHDAMWQNDVFATDASVAAAFGHHQTAVVGGGSSIETGTKLYISNLDYGVSNEDIKELFSEVGDLKRYGIHYDRSGRSKGTAEVVFSRRGDALAAVKRYNNVQLDGKLMKIEIVGTNLSAPALPILATAQIPFPTNGILGNFNENFNGNFNGNFNGNFRGRGRGGFMGRPRGGGFGGGNFRGGRGARGRGGRGSGGRGRDENVSAEDLDAELDKYHKEAMETS</sequence>
<name>THO4B_ARATH</name>
<feature type="initiator methionine" description="Removed" evidence="7">
    <location>
        <position position="1"/>
    </location>
</feature>
<feature type="chain" id="PRO_0000425586" description="THO complex subunit 4B">
    <location>
        <begin position="2"/>
        <end position="292"/>
    </location>
</feature>
<feature type="domain" description="RRM" evidence="2">
    <location>
        <begin position="108"/>
        <end position="185"/>
    </location>
</feature>
<feature type="region of interest" description="Disordered" evidence="3">
    <location>
        <begin position="1"/>
        <end position="50"/>
    </location>
</feature>
<feature type="region of interest" description="Disordered" evidence="3">
    <location>
        <begin position="241"/>
        <end position="292"/>
    </location>
</feature>
<feature type="compositionally biased region" description="Gly residues" evidence="3">
    <location>
        <begin position="23"/>
        <end position="42"/>
    </location>
</feature>
<feature type="compositionally biased region" description="Gly residues" evidence="3">
    <location>
        <begin position="241"/>
        <end position="252"/>
    </location>
</feature>
<feature type="compositionally biased region" description="Basic and acidic residues" evidence="3">
    <location>
        <begin position="280"/>
        <end position="292"/>
    </location>
</feature>
<feature type="modified residue" description="N-acetylserine" evidence="7">
    <location>
        <position position="2"/>
    </location>
</feature>
<feature type="splice variant" id="VSP_053742" description="In isoform 2." evidence="6">
    <location>
        <begin position="228"/>
        <end position="229"/>
    </location>
</feature>
<reference key="1">
    <citation type="journal article" date="2000" name="Nature">
        <title>Sequence and analysis of chromosome 5 of the plant Arabidopsis thaliana.</title>
        <authorList>
            <person name="Tabata S."/>
            <person name="Kaneko T."/>
            <person name="Nakamura Y."/>
            <person name="Kotani H."/>
            <person name="Kato T."/>
            <person name="Asamizu E."/>
            <person name="Miyajima N."/>
            <person name="Sasamoto S."/>
            <person name="Kimura T."/>
            <person name="Hosouchi T."/>
            <person name="Kawashima K."/>
            <person name="Kohara M."/>
            <person name="Matsumoto M."/>
            <person name="Matsuno A."/>
            <person name="Muraki A."/>
            <person name="Nakayama S."/>
            <person name="Nakazaki N."/>
            <person name="Naruo K."/>
            <person name="Okumura S."/>
            <person name="Shinpo S."/>
            <person name="Takeuchi C."/>
            <person name="Wada T."/>
            <person name="Watanabe A."/>
            <person name="Yamada M."/>
            <person name="Yasuda M."/>
            <person name="Sato S."/>
            <person name="de la Bastide M."/>
            <person name="Huang E."/>
            <person name="Spiegel L."/>
            <person name="Gnoj L."/>
            <person name="O'Shaughnessy A."/>
            <person name="Preston R."/>
            <person name="Habermann K."/>
            <person name="Murray J."/>
            <person name="Johnson D."/>
            <person name="Rohlfing T."/>
            <person name="Nelson J."/>
            <person name="Stoneking T."/>
            <person name="Pepin K."/>
            <person name="Spieth J."/>
            <person name="Sekhon M."/>
            <person name="Armstrong J."/>
            <person name="Becker M."/>
            <person name="Belter E."/>
            <person name="Cordum H."/>
            <person name="Cordes M."/>
            <person name="Courtney L."/>
            <person name="Courtney W."/>
            <person name="Dante M."/>
            <person name="Du H."/>
            <person name="Edwards J."/>
            <person name="Fryman J."/>
            <person name="Haakensen B."/>
            <person name="Lamar E."/>
            <person name="Latreille P."/>
            <person name="Leonard S."/>
            <person name="Meyer R."/>
            <person name="Mulvaney E."/>
            <person name="Ozersky P."/>
            <person name="Riley A."/>
            <person name="Strowmatt C."/>
            <person name="Wagner-McPherson C."/>
            <person name="Wollam A."/>
            <person name="Yoakum M."/>
            <person name="Bell M."/>
            <person name="Dedhia N."/>
            <person name="Parnell L."/>
            <person name="Shah R."/>
            <person name="Rodriguez M."/>
            <person name="Hoon See L."/>
            <person name="Vil D."/>
            <person name="Baker J."/>
            <person name="Kirchoff K."/>
            <person name="Toth K."/>
            <person name="King L."/>
            <person name="Bahret A."/>
            <person name="Miller B."/>
            <person name="Marra M.A."/>
            <person name="Martienssen R."/>
            <person name="McCombie W.R."/>
            <person name="Wilson R.K."/>
            <person name="Murphy G."/>
            <person name="Bancroft I."/>
            <person name="Volckaert G."/>
            <person name="Wambutt R."/>
            <person name="Duesterhoeft A."/>
            <person name="Stiekema W."/>
            <person name="Pohl T."/>
            <person name="Entian K.-D."/>
            <person name="Terryn N."/>
            <person name="Hartley N."/>
            <person name="Bent E."/>
            <person name="Johnson S."/>
            <person name="Langham S.-A."/>
            <person name="McCullagh B."/>
            <person name="Robben J."/>
            <person name="Grymonprez B."/>
            <person name="Zimmermann W."/>
            <person name="Ramsperger U."/>
            <person name="Wedler H."/>
            <person name="Balke K."/>
            <person name="Wedler E."/>
            <person name="Peters S."/>
            <person name="van Staveren M."/>
            <person name="Dirkse W."/>
            <person name="Mooijman P."/>
            <person name="Klein Lankhorst R."/>
            <person name="Weitzenegger T."/>
            <person name="Bothe G."/>
            <person name="Rose M."/>
            <person name="Hauf J."/>
            <person name="Berneiser S."/>
            <person name="Hempel S."/>
            <person name="Feldpausch M."/>
            <person name="Lamberth S."/>
            <person name="Villarroel R."/>
            <person name="Gielen J."/>
            <person name="Ardiles W."/>
            <person name="Bents O."/>
            <person name="Lemcke K."/>
            <person name="Kolesov G."/>
            <person name="Mayer K.F.X."/>
            <person name="Rudd S."/>
            <person name="Schoof H."/>
            <person name="Schueller C."/>
            <person name="Zaccaria P."/>
            <person name="Mewes H.-W."/>
            <person name="Bevan M."/>
            <person name="Fransz P.F."/>
        </authorList>
    </citation>
    <scope>NUCLEOTIDE SEQUENCE [LARGE SCALE GENOMIC DNA] (ISOFORM 2)</scope>
    <source>
        <strain>cv. Columbia</strain>
    </source>
</reference>
<reference key="2">
    <citation type="journal article" date="2017" name="Plant J.">
        <title>Araport11: a complete reannotation of the Arabidopsis thaliana reference genome.</title>
        <authorList>
            <person name="Cheng C.Y."/>
            <person name="Krishnakumar V."/>
            <person name="Chan A.P."/>
            <person name="Thibaud-Nissen F."/>
            <person name="Schobel S."/>
            <person name="Town C.D."/>
        </authorList>
    </citation>
    <scope>GENOME REANNOTATION</scope>
    <source>
        <strain>cv. Columbia</strain>
    </source>
</reference>
<reference key="3">
    <citation type="journal article" date="2003" name="Science">
        <title>Empirical analysis of transcriptional activity in the Arabidopsis genome.</title>
        <authorList>
            <person name="Yamada K."/>
            <person name="Lim J."/>
            <person name="Dale J.M."/>
            <person name="Chen H."/>
            <person name="Shinn P."/>
            <person name="Palm C.J."/>
            <person name="Southwick A.M."/>
            <person name="Wu H.C."/>
            <person name="Kim C.J."/>
            <person name="Nguyen M."/>
            <person name="Pham P.K."/>
            <person name="Cheuk R.F."/>
            <person name="Karlin-Newmann G."/>
            <person name="Liu S.X."/>
            <person name="Lam B."/>
            <person name="Sakano H."/>
            <person name="Wu T."/>
            <person name="Yu G."/>
            <person name="Miranda M."/>
            <person name="Quach H.L."/>
            <person name="Tripp M."/>
            <person name="Chang C.H."/>
            <person name="Lee J.M."/>
            <person name="Toriumi M.J."/>
            <person name="Chan M.M."/>
            <person name="Tang C.C."/>
            <person name="Onodera C.S."/>
            <person name="Deng J.M."/>
            <person name="Akiyama K."/>
            <person name="Ansari Y."/>
            <person name="Arakawa T."/>
            <person name="Banh J."/>
            <person name="Banno F."/>
            <person name="Bowser L."/>
            <person name="Brooks S.Y."/>
            <person name="Carninci P."/>
            <person name="Chao Q."/>
            <person name="Choy N."/>
            <person name="Enju A."/>
            <person name="Goldsmith A.D."/>
            <person name="Gurjal M."/>
            <person name="Hansen N.F."/>
            <person name="Hayashizaki Y."/>
            <person name="Johnson-Hopson C."/>
            <person name="Hsuan V.W."/>
            <person name="Iida K."/>
            <person name="Karnes M."/>
            <person name="Khan S."/>
            <person name="Koesema E."/>
            <person name="Ishida J."/>
            <person name="Jiang P.X."/>
            <person name="Jones T."/>
            <person name="Kawai J."/>
            <person name="Kamiya A."/>
            <person name="Meyers C."/>
            <person name="Nakajima M."/>
            <person name="Narusaka M."/>
            <person name="Seki M."/>
            <person name="Sakurai T."/>
            <person name="Satou M."/>
            <person name="Tamse R."/>
            <person name="Vaysberg M."/>
            <person name="Wallender E.K."/>
            <person name="Wong C."/>
            <person name="Yamamura Y."/>
            <person name="Yuan S."/>
            <person name="Shinozaki K."/>
            <person name="Davis R.W."/>
            <person name="Theologis A."/>
            <person name="Ecker J.R."/>
        </authorList>
    </citation>
    <scope>NUCLEOTIDE SEQUENCE [LARGE SCALE MRNA] (ISOFORM 1)</scope>
    <source>
        <strain>cv. Columbia</strain>
    </source>
</reference>
<reference key="4">
    <citation type="journal article" date="2004" name="Plant Physiol.">
        <title>Relocalization of nuclear ALY proteins to the cytoplasm by the tomato bushy stunt virus P19 pathogenicity protein.</title>
        <authorList>
            <person name="Uhrig J.F."/>
            <person name="Canto T."/>
            <person name="Marshall D."/>
            <person name="MacFarlane S.A."/>
        </authorList>
    </citation>
    <scope>SUBCELLULAR LOCATION</scope>
</reference>
<reference key="5">
    <citation type="journal article" date="2012" name="Mol. Cell. Proteomics">
        <title>Comparative large-scale characterisation of plant vs. mammal proteins reveals similar and idiosyncratic N-alpha acetylation features.</title>
        <authorList>
            <person name="Bienvenut W.V."/>
            <person name="Sumpton D."/>
            <person name="Martinez A."/>
            <person name="Lilla S."/>
            <person name="Espagne C."/>
            <person name="Meinnel T."/>
            <person name="Giglione C."/>
        </authorList>
    </citation>
    <scope>ACETYLATION [LARGE SCALE ANALYSIS] AT SER-2</scope>
    <scope>CLEAVAGE OF INITIATOR METHIONINE [LARGE SCALE ANALYSIS]</scope>
    <scope>IDENTIFICATION BY MASS SPECTROMETRY [LARGE SCALE ANALYSIS]</scope>
</reference>
<reference key="6">
    <citation type="journal article" date="2013" name="PLoS ONE">
        <title>Arabidopsis DEAD-box RNA helicase UAP56 interacts with both RNA and DNA as well as with mRNA export factors.</title>
        <authorList>
            <person name="Kammel C."/>
            <person name="Thomaier M."/>
            <person name="Sorensen B.B."/>
            <person name="Schubert T."/>
            <person name="Langst G."/>
            <person name="Grasser M."/>
            <person name="Grasser K.D."/>
        </authorList>
    </citation>
    <scope>INTERACTION WITH RH15 AND RH56</scope>
</reference>
<dbReference type="EMBL" id="AL162971">
    <property type="protein sequence ID" value="CAB85990.1"/>
    <property type="molecule type" value="Genomic_DNA"/>
</dbReference>
<dbReference type="EMBL" id="CP002688">
    <property type="protein sequence ID" value="AED90485.1"/>
    <property type="molecule type" value="Genomic_DNA"/>
</dbReference>
<dbReference type="EMBL" id="CP002688">
    <property type="protein sequence ID" value="AED90486.1"/>
    <property type="molecule type" value="Genomic_DNA"/>
</dbReference>
<dbReference type="EMBL" id="AY140010">
    <property type="protein sequence ID" value="AAM98152.1"/>
    <property type="molecule type" value="mRNA"/>
</dbReference>
<dbReference type="EMBL" id="BT006323">
    <property type="protein sequence ID" value="AAP13431.1"/>
    <property type="molecule type" value="mRNA"/>
</dbReference>
<dbReference type="PIR" id="T48274">
    <property type="entry name" value="T48274"/>
</dbReference>
<dbReference type="RefSeq" id="NP_001190207.1">
    <molecule id="Q8L719-2"/>
    <property type="nucleotide sequence ID" value="NM_001203278.1"/>
</dbReference>
<dbReference type="RefSeq" id="NP_195873.2">
    <molecule id="Q8L719-1"/>
    <property type="nucleotide sequence ID" value="NM_120331.5"/>
</dbReference>
<dbReference type="SMR" id="Q8L719"/>
<dbReference type="BioGRID" id="17199">
    <property type="interactions" value="12"/>
</dbReference>
<dbReference type="FunCoup" id="Q8L719">
    <property type="interactions" value="4329"/>
</dbReference>
<dbReference type="IntAct" id="Q8L719">
    <property type="interactions" value="5"/>
</dbReference>
<dbReference type="STRING" id="3702.Q8L719"/>
<dbReference type="iPTMnet" id="Q8L719"/>
<dbReference type="PaxDb" id="3702-AT5G02530.1"/>
<dbReference type="ProteomicsDB" id="246422">
    <molecule id="Q8L719-1"/>
</dbReference>
<dbReference type="EnsemblPlants" id="AT5G02530.1">
    <molecule id="Q8L719-1"/>
    <property type="protein sequence ID" value="AT5G02530.1"/>
    <property type="gene ID" value="AT5G02530"/>
</dbReference>
<dbReference type="EnsemblPlants" id="AT5G02530.2">
    <molecule id="Q8L719-2"/>
    <property type="protein sequence ID" value="AT5G02530.2"/>
    <property type="gene ID" value="AT5G02530"/>
</dbReference>
<dbReference type="GeneID" id="831923"/>
<dbReference type="Gramene" id="AT5G02530.1">
    <molecule id="Q8L719-1"/>
    <property type="protein sequence ID" value="AT5G02530.1"/>
    <property type="gene ID" value="AT5G02530"/>
</dbReference>
<dbReference type="Gramene" id="AT5G02530.2">
    <molecule id="Q8L719-2"/>
    <property type="protein sequence ID" value="AT5G02530.2"/>
    <property type="gene ID" value="AT5G02530"/>
</dbReference>
<dbReference type="KEGG" id="ath:AT5G02530"/>
<dbReference type="Araport" id="AT5G02530"/>
<dbReference type="TAIR" id="AT5G02530">
    <property type="gene designation" value="ALY2"/>
</dbReference>
<dbReference type="eggNOG" id="KOG0533">
    <property type="taxonomic scope" value="Eukaryota"/>
</dbReference>
<dbReference type="HOGENOM" id="CLU_052367_0_0_1"/>
<dbReference type="InParanoid" id="Q8L719"/>
<dbReference type="OMA" id="YNAECKM"/>
<dbReference type="OrthoDB" id="1049195at2759"/>
<dbReference type="PhylomeDB" id="Q8L719"/>
<dbReference type="CD-CODE" id="4299E36E">
    <property type="entry name" value="Nucleolus"/>
</dbReference>
<dbReference type="PRO" id="PR:Q8L719"/>
<dbReference type="Proteomes" id="UP000006548">
    <property type="component" value="Chromosome 5"/>
</dbReference>
<dbReference type="ExpressionAtlas" id="Q8L719">
    <property type="expression patterns" value="baseline and differential"/>
</dbReference>
<dbReference type="GO" id="GO:0005654">
    <property type="term" value="C:nucleoplasm"/>
    <property type="evidence" value="ECO:0000314"/>
    <property type="project" value="UniProtKB"/>
</dbReference>
<dbReference type="GO" id="GO:0005886">
    <property type="term" value="C:plasma membrane"/>
    <property type="evidence" value="ECO:0007005"/>
    <property type="project" value="TAIR"/>
</dbReference>
<dbReference type="GO" id="GO:0003729">
    <property type="term" value="F:mRNA binding"/>
    <property type="evidence" value="ECO:0000314"/>
    <property type="project" value="TAIR"/>
</dbReference>
<dbReference type="GO" id="GO:0051028">
    <property type="term" value="P:mRNA transport"/>
    <property type="evidence" value="ECO:0007669"/>
    <property type="project" value="UniProtKB-KW"/>
</dbReference>
<dbReference type="CDD" id="cd12680">
    <property type="entry name" value="RRM_THOC4"/>
    <property type="match status" value="1"/>
</dbReference>
<dbReference type="FunFam" id="3.30.70.330:FF:000273">
    <property type="entry name" value="THO complex subunit 4"/>
    <property type="match status" value="1"/>
</dbReference>
<dbReference type="Gene3D" id="3.30.70.330">
    <property type="match status" value="1"/>
</dbReference>
<dbReference type="InterPro" id="IPR051229">
    <property type="entry name" value="ALYREF_mRNA_export"/>
</dbReference>
<dbReference type="InterPro" id="IPR025715">
    <property type="entry name" value="FoP_C"/>
</dbReference>
<dbReference type="InterPro" id="IPR012677">
    <property type="entry name" value="Nucleotide-bd_a/b_plait_sf"/>
</dbReference>
<dbReference type="InterPro" id="IPR035979">
    <property type="entry name" value="RBD_domain_sf"/>
</dbReference>
<dbReference type="InterPro" id="IPR000504">
    <property type="entry name" value="RRM_dom"/>
</dbReference>
<dbReference type="PANTHER" id="PTHR19965">
    <property type="entry name" value="RNA AND EXPORT FACTOR BINDING PROTEIN"/>
    <property type="match status" value="1"/>
</dbReference>
<dbReference type="PANTHER" id="PTHR19965:SF35">
    <property type="entry name" value="RNA ANNEALING PROTEIN YRA1"/>
    <property type="match status" value="1"/>
</dbReference>
<dbReference type="Pfam" id="PF00076">
    <property type="entry name" value="RRM_1"/>
    <property type="match status" value="1"/>
</dbReference>
<dbReference type="SMART" id="SM01218">
    <property type="entry name" value="FoP_duplication"/>
    <property type="match status" value="1"/>
</dbReference>
<dbReference type="SMART" id="SM00360">
    <property type="entry name" value="RRM"/>
    <property type="match status" value="1"/>
</dbReference>
<dbReference type="SUPFAM" id="SSF54928">
    <property type="entry name" value="RNA-binding domain, RBD"/>
    <property type="match status" value="1"/>
</dbReference>
<dbReference type="PROSITE" id="PS50102">
    <property type="entry name" value="RRM"/>
    <property type="match status" value="1"/>
</dbReference>
<proteinExistence type="evidence at protein level"/>
<protein>
    <recommendedName>
        <fullName>THO complex subunit 4B</fullName>
    </recommendedName>
    <alternativeName>
        <fullName>ALYREF homolog 2</fullName>
        <shortName>AtALY2</shortName>
    </alternativeName>
</protein>
<keyword id="KW-0007">Acetylation</keyword>
<keyword id="KW-0025">Alternative splicing</keyword>
<keyword id="KW-0509">mRNA transport</keyword>
<keyword id="KW-0539">Nucleus</keyword>
<keyword id="KW-1185">Reference proteome</keyword>
<keyword id="KW-0694">RNA-binding</keyword>
<keyword id="KW-0813">Transport</keyword>